<comment type="catalytic activity">
    <reaction evidence="1">
        <text>urea + 2 H2O + H(+) = hydrogencarbonate + 2 NH4(+)</text>
        <dbReference type="Rhea" id="RHEA:20557"/>
        <dbReference type="ChEBI" id="CHEBI:15377"/>
        <dbReference type="ChEBI" id="CHEBI:15378"/>
        <dbReference type="ChEBI" id="CHEBI:16199"/>
        <dbReference type="ChEBI" id="CHEBI:17544"/>
        <dbReference type="ChEBI" id="CHEBI:28938"/>
        <dbReference type="EC" id="3.5.1.5"/>
    </reaction>
</comment>
<comment type="pathway">
    <text evidence="1">Nitrogen metabolism; urea degradation; CO(2) and NH(3) from urea (urease route): step 1/1.</text>
</comment>
<comment type="subunit">
    <text evidence="1">Heterotrimer of UreA (gamma), UreB (beta) and UreC (alpha) subunits. Three heterotrimers associate to form the active enzyme.</text>
</comment>
<comment type="subcellular location">
    <subcellularLocation>
        <location evidence="1">Cytoplasm</location>
    </subcellularLocation>
</comment>
<comment type="similarity">
    <text evidence="1">Belongs to the urease gamma subunit family.</text>
</comment>
<keyword id="KW-0963">Cytoplasm</keyword>
<keyword id="KW-0378">Hydrolase</keyword>
<reference key="1">
    <citation type="journal article" date="2006" name="Proc. Natl. Acad. Sci. U.S.A.">
        <title>Comparative genomics of the lactic acid bacteria.</title>
        <authorList>
            <person name="Makarova K.S."/>
            <person name="Slesarev A."/>
            <person name="Wolf Y.I."/>
            <person name="Sorokin A."/>
            <person name="Mirkin B."/>
            <person name="Koonin E.V."/>
            <person name="Pavlov A."/>
            <person name="Pavlova N."/>
            <person name="Karamychev V."/>
            <person name="Polouchine N."/>
            <person name="Shakhova V."/>
            <person name="Grigoriev I."/>
            <person name="Lou Y."/>
            <person name="Rohksar D."/>
            <person name="Lucas S."/>
            <person name="Huang K."/>
            <person name="Goodstein D.M."/>
            <person name="Hawkins T."/>
            <person name="Plengvidhya V."/>
            <person name="Welker D."/>
            <person name="Hughes J."/>
            <person name="Goh Y."/>
            <person name="Benson A."/>
            <person name="Baldwin K."/>
            <person name="Lee J.-H."/>
            <person name="Diaz-Muniz I."/>
            <person name="Dosti B."/>
            <person name="Smeianov V."/>
            <person name="Wechter W."/>
            <person name="Barabote R."/>
            <person name="Lorca G."/>
            <person name="Altermann E."/>
            <person name="Barrangou R."/>
            <person name="Ganesan B."/>
            <person name="Xie Y."/>
            <person name="Rawsthorne H."/>
            <person name="Tamir D."/>
            <person name="Parker C."/>
            <person name="Breidt F."/>
            <person name="Broadbent J.R."/>
            <person name="Hutkins R."/>
            <person name="O'Sullivan D."/>
            <person name="Steele J."/>
            <person name="Unlu G."/>
            <person name="Saier M.H. Jr."/>
            <person name="Klaenhammer T."/>
            <person name="Richardson P."/>
            <person name="Kozyavkin S."/>
            <person name="Weimer B.C."/>
            <person name="Mills D.A."/>
        </authorList>
    </citation>
    <scope>NUCLEOTIDE SEQUENCE [LARGE SCALE GENOMIC DNA]</scope>
    <source>
        <strain>ATCC BAA-491 / LMD-9</strain>
    </source>
</reference>
<gene>
    <name evidence="1" type="primary">ureA</name>
    <name type="ordered locus">STER_0323</name>
</gene>
<sequence>MQLTMREQEKMMISLAAMIAQRRKDKGIKLNHPEAVALITDYVLEGAREGKTVAQLMDEARNLLTREDVMEGIAEMIPMIQVEATFTDSTKLVTVHDPIQ</sequence>
<evidence type="ECO:0000255" key="1">
    <source>
        <dbReference type="HAMAP-Rule" id="MF_00739"/>
    </source>
</evidence>
<organism>
    <name type="scientific">Streptococcus thermophilus (strain ATCC BAA-491 / LMD-9)</name>
    <dbReference type="NCBI Taxonomy" id="322159"/>
    <lineage>
        <taxon>Bacteria</taxon>
        <taxon>Bacillati</taxon>
        <taxon>Bacillota</taxon>
        <taxon>Bacilli</taxon>
        <taxon>Lactobacillales</taxon>
        <taxon>Streptococcaceae</taxon>
        <taxon>Streptococcus</taxon>
    </lineage>
</organism>
<protein>
    <recommendedName>
        <fullName evidence="1">Urease subunit gamma</fullName>
        <ecNumber evidence="1">3.5.1.5</ecNumber>
    </recommendedName>
    <alternativeName>
        <fullName evidence="1">Urea amidohydrolase subunit gamma</fullName>
    </alternativeName>
</protein>
<name>URE3_STRTD</name>
<proteinExistence type="inferred from homology"/>
<dbReference type="EC" id="3.5.1.5" evidence="1"/>
<dbReference type="EMBL" id="CP000419">
    <property type="protein sequence ID" value="ABJ65627.1"/>
    <property type="molecule type" value="Genomic_DNA"/>
</dbReference>
<dbReference type="RefSeq" id="WP_002886558.1">
    <property type="nucleotide sequence ID" value="NZ_CP086001.1"/>
</dbReference>
<dbReference type="SMR" id="Q03ME5"/>
<dbReference type="KEGG" id="ste:STER_0323"/>
<dbReference type="HOGENOM" id="CLU_145825_1_0_9"/>
<dbReference type="UniPathway" id="UPA00258">
    <property type="reaction ID" value="UER00370"/>
</dbReference>
<dbReference type="GO" id="GO:0005737">
    <property type="term" value="C:cytoplasm"/>
    <property type="evidence" value="ECO:0007669"/>
    <property type="project" value="UniProtKB-SubCell"/>
</dbReference>
<dbReference type="GO" id="GO:0016151">
    <property type="term" value="F:nickel cation binding"/>
    <property type="evidence" value="ECO:0007669"/>
    <property type="project" value="InterPro"/>
</dbReference>
<dbReference type="GO" id="GO:0009039">
    <property type="term" value="F:urease activity"/>
    <property type="evidence" value="ECO:0007669"/>
    <property type="project" value="UniProtKB-UniRule"/>
</dbReference>
<dbReference type="GO" id="GO:0043419">
    <property type="term" value="P:urea catabolic process"/>
    <property type="evidence" value="ECO:0007669"/>
    <property type="project" value="UniProtKB-UniRule"/>
</dbReference>
<dbReference type="CDD" id="cd00390">
    <property type="entry name" value="Urease_gamma"/>
    <property type="match status" value="1"/>
</dbReference>
<dbReference type="Gene3D" id="3.30.280.10">
    <property type="entry name" value="Urease, gamma-like subunit"/>
    <property type="match status" value="1"/>
</dbReference>
<dbReference type="HAMAP" id="MF_00739">
    <property type="entry name" value="Urease_gamma"/>
    <property type="match status" value="1"/>
</dbReference>
<dbReference type="InterPro" id="IPR012010">
    <property type="entry name" value="Urease_gamma"/>
</dbReference>
<dbReference type="InterPro" id="IPR002026">
    <property type="entry name" value="Urease_gamma/gamma-beta_su"/>
</dbReference>
<dbReference type="InterPro" id="IPR036463">
    <property type="entry name" value="Urease_gamma_sf"/>
</dbReference>
<dbReference type="InterPro" id="IPR050069">
    <property type="entry name" value="Urease_subunit"/>
</dbReference>
<dbReference type="NCBIfam" id="NF009712">
    <property type="entry name" value="PRK13241.1"/>
    <property type="match status" value="1"/>
</dbReference>
<dbReference type="NCBIfam" id="TIGR00193">
    <property type="entry name" value="urease_gam"/>
    <property type="match status" value="1"/>
</dbReference>
<dbReference type="PANTHER" id="PTHR33569">
    <property type="entry name" value="UREASE"/>
    <property type="match status" value="1"/>
</dbReference>
<dbReference type="PANTHER" id="PTHR33569:SF1">
    <property type="entry name" value="UREASE"/>
    <property type="match status" value="1"/>
</dbReference>
<dbReference type="Pfam" id="PF00547">
    <property type="entry name" value="Urease_gamma"/>
    <property type="match status" value="1"/>
</dbReference>
<dbReference type="PIRSF" id="PIRSF001223">
    <property type="entry name" value="Urease_gamma"/>
    <property type="match status" value="1"/>
</dbReference>
<dbReference type="SUPFAM" id="SSF54111">
    <property type="entry name" value="Urease, gamma-subunit"/>
    <property type="match status" value="1"/>
</dbReference>
<feature type="chain" id="PRO_1000046372" description="Urease subunit gamma">
    <location>
        <begin position="1"/>
        <end position="100"/>
    </location>
</feature>
<accession>Q03ME5</accession>